<protein>
    <recommendedName>
        <fullName>Dihydromonapterin reductase</fullName>
        <shortName>H(2)-MPt reductase</shortName>
        <ecNumber evidence="1">1.5.1.50</ecNumber>
    </recommendedName>
    <alternativeName>
        <fullName>Dihydrofolate reductase</fullName>
        <shortName>DHFR</shortName>
        <ecNumber evidence="1">1.5.1.3</ecNumber>
    </alternativeName>
</protein>
<sequence length="240" mass="26348">MGKTQPLPILITGGGRRIGLALAWHFINQKQPVIVSYRTHYPAIDGLINAGAQCIQADFSTNDGVMAFADEVLKSTHGLRAILHNASAWMAEKPGAPLADVLACMMQIHVNTPYLLNHALERLLRGHGHAASDIIHFTDYVVERGSDKHIAYAASKAALDNMTRSFARKLAPEVKVNSIAPSLILFNEHDDAEYRQQALNKSLMKTAPGEKEVIDLVDYLLTSCFVTGRSFPLDGGRHLR</sequence>
<dbReference type="EC" id="1.5.1.50" evidence="1"/>
<dbReference type="EC" id="1.5.1.3" evidence="1"/>
<dbReference type="EMBL" id="CP000034">
    <property type="protein sequence ID" value="ABB61683.1"/>
    <property type="molecule type" value="Genomic_DNA"/>
</dbReference>
<dbReference type="RefSeq" id="WP_000520804.1">
    <property type="nucleotide sequence ID" value="NC_007606.1"/>
</dbReference>
<dbReference type="RefSeq" id="YP_403174.1">
    <property type="nucleotide sequence ID" value="NC_007606.1"/>
</dbReference>
<dbReference type="SMR" id="Q32G72"/>
<dbReference type="STRING" id="300267.SDY_1547"/>
<dbReference type="EnsemblBacteria" id="ABB61683">
    <property type="protein sequence ID" value="ABB61683"/>
    <property type="gene ID" value="SDY_1547"/>
</dbReference>
<dbReference type="KEGG" id="sdy:SDY_1547"/>
<dbReference type="PATRIC" id="fig|300267.13.peg.1856"/>
<dbReference type="HOGENOM" id="CLU_010194_1_3_6"/>
<dbReference type="Proteomes" id="UP000002716">
    <property type="component" value="Chromosome"/>
</dbReference>
<dbReference type="GO" id="GO:0004146">
    <property type="term" value="F:dihydrofolate reductase activity"/>
    <property type="evidence" value="ECO:0007669"/>
    <property type="project" value="UniProtKB-EC"/>
</dbReference>
<dbReference type="GO" id="GO:0006730">
    <property type="term" value="P:one-carbon metabolic process"/>
    <property type="evidence" value="ECO:0007669"/>
    <property type="project" value="UniProtKB-KW"/>
</dbReference>
<dbReference type="CDD" id="cd05357">
    <property type="entry name" value="PR_SDR_c"/>
    <property type="match status" value="1"/>
</dbReference>
<dbReference type="FunFam" id="3.40.50.720:FF:000225">
    <property type="entry name" value="Dihydrofolate reductase FolM"/>
    <property type="match status" value="1"/>
</dbReference>
<dbReference type="Gene3D" id="3.40.50.720">
    <property type="entry name" value="NAD(P)-binding Rossmann-like Domain"/>
    <property type="match status" value="1"/>
</dbReference>
<dbReference type="InterPro" id="IPR036291">
    <property type="entry name" value="NAD(P)-bd_dom_sf"/>
</dbReference>
<dbReference type="InterPro" id="IPR020904">
    <property type="entry name" value="Sc_DH/Rdtase_CS"/>
</dbReference>
<dbReference type="InterPro" id="IPR002347">
    <property type="entry name" value="SDR_fam"/>
</dbReference>
<dbReference type="NCBIfam" id="NF005066">
    <property type="entry name" value="PRK06483.1"/>
    <property type="match status" value="1"/>
</dbReference>
<dbReference type="PANTHER" id="PTHR43639:SF6">
    <property type="entry name" value="DIHYDROMONAPTERIN REDUCTASE"/>
    <property type="match status" value="1"/>
</dbReference>
<dbReference type="PANTHER" id="PTHR43639">
    <property type="entry name" value="OXIDOREDUCTASE, SHORT-CHAIN DEHYDROGENASE/REDUCTASE FAMILY (AFU_ORTHOLOGUE AFUA_5G02870)"/>
    <property type="match status" value="1"/>
</dbReference>
<dbReference type="Pfam" id="PF13561">
    <property type="entry name" value="adh_short_C2"/>
    <property type="match status" value="1"/>
</dbReference>
<dbReference type="PRINTS" id="PR00081">
    <property type="entry name" value="GDHRDH"/>
</dbReference>
<dbReference type="SUPFAM" id="SSF51735">
    <property type="entry name" value="NAD(P)-binding Rossmann-fold domains"/>
    <property type="match status" value="1"/>
</dbReference>
<dbReference type="PROSITE" id="PS00061">
    <property type="entry name" value="ADH_SHORT"/>
    <property type="match status" value="1"/>
</dbReference>
<comment type="function">
    <text evidence="1">Catalyzes the reduction of dihydromonapterin to tetrahydromonapterin. Also has lower activity with dihydrofolate.</text>
</comment>
<comment type="catalytic activity">
    <reaction evidence="1">
        <text>(6S)-5,6,7,8-tetrahydrofolate + NADP(+) = 7,8-dihydrofolate + NADPH + H(+)</text>
        <dbReference type="Rhea" id="RHEA:15009"/>
        <dbReference type="ChEBI" id="CHEBI:15378"/>
        <dbReference type="ChEBI" id="CHEBI:57451"/>
        <dbReference type="ChEBI" id="CHEBI:57453"/>
        <dbReference type="ChEBI" id="CHEBI:57783"/>
        <dbReference type="ChEBI" id="CHEBI:58349"/>
        <dbReference type="EC" id="1.5.1.3"/>
    </reaction>
</comment>
<comment type="catalytic activity">
    <reaction evidence="1">
        <text>7,8-dihydromonapterin + NADPH + H(+) = 5,6,7,8-tetrahydromonapterin + NADP(+)</text>
        <dbReference type="Rhea" id="RHEA:34847"/>
        <dbReference type="ChEBI" id="CHEBI:15378"/>
        <dbReference type="ChEBI" id="CHEBI:57783"/>
        <dbReference type="ChEBI" id="CHEBI:58349"/>
        <dbReference type="ChEBI" id="CHEBI:71175"/>
        <dbReference type="ChEBI" id="CHEBI:71177"/>
        <dbReference type="EC" id="1.5.1.50"/>
    </reaction>
</comment>
<comment type="similarity">
    <text evidence="3">Belongs to the short-chain dehydrogenases/reductases (SDR) family. FolM subfamily.</text>
</comment>
<organism>
    <name type="scientific">Shigella dysenteriae serotype 1 (strain Sd197)</name>
    <dbReference type="NCBI Taxonomy" id="300267"/>
    <lineage>
        <taxon>Bacteria</taxon>
        <taxon>Pseudomonadati</taxon>
        <taxon>Pseudomonadota</taxon>
        <taxon>Gammaproteobacteria</taxon>
        <taxon>Enterobacterales</taxon>
        <taxon>Enterobacteriaceae</taxon>
        <taxon>Shigella</taxon>
    </lineage>
</organism>
<accession>Q32G72</accession>
<gene>
    <name type="primary">folM</name>
    <name type="ordered locus">SDY_1547</name>
</gene>
<keyword id="KW-0521">NADP</keyword>
<keyword id="KW-0554">One-carbon metabolism</keyword>
<keyword id="KW-0560">Oxidoreductase</keyword>
<keyword id="KW-1185">Reference proteome</keyword>
<name>FOLM_SHIDS</name>
<proteinExistence type="inferred from homology"/>
<feature type="chain" id="PRO_0000339400" description="Dihydromonapterin reductase">
    <location>
        <begin position="1"/>
        <end position="240"/>
    </location>
</feature>
<feature type="active site" description="Proton acceptor" evidence="2">
    <location>
        <position position="152"/>
    </location>
</feature>
<evidence type="ECO:0000250" key="1">
    <source>
        <dbReference type="UniProtKB" id="P0AFS3"/>
    </source>
</evidence>
<evidence type="ECO:0000255" key="2">
    <source>
        <dbReference type="PROSITE-ProRule" id="PRU10001"/>
    </source>
</evidence>
<evidence type="ECO:0000305" key="3"/>
<reference key="1">
    <citation type="journal article" date="2005" name="Nucleic Acids Res.">
        <title>Genome dynamics and diversity of Shigella species, the etiologic agents of bacillary dysentery.</title>
        <authorList>
            <person name="Yang F."/>
            <person name="Yang J."/>
            <person name="Zhang X."/>
            <person name="Chen L."/>
            <person name="Jiang Y."/>
            <person name="Yan Y."/>
            <person name="Tang X."/>
            <person name="Wang J."/>
            <person name="Xiong Z."/>
            <person name="Dong J."/>
            <person name="Xue Y."/>
            <person name="Zhu Y."/>
            <person name="Xu X."/>
            <person name="Sun L."/>
            <person name="Chen S."/>
            <person name="Nie H."/>
            <person name="Peng J."/>
            <person name="Xu J."/>
            <person name="Wang Y."/>
            <person name="Yuan Z."/>
            <person name="Wen Y."/>
            <person name="Yao Z."/>
            <person name="Shen Y."/>
            <person name="Qiang B."/>
            <person name="Hou Y."/>
            <person name="Yu J."/>
            <person name="Jin Q."/>
        </authorList>
    </citation>
    <scope>NUCLEOTIDE SEQUENCE [LARGE SCALE GENOMIC DNA]</scope>
    <source>
        <strain>Sd197</strain>
    </source>
</reference>